<proteinExistence type="inferred from homology"/>
<accession>A1AGI2</accession>
<comment type="function">
    <text evidence="1">Channel that opens in response to stretch forces in the membrane lipid bilayer. May participate in the regulation of osmotic pressure changes within the cell.</text>
</comment>
<comment type="subunit">
    <text evidence="1">Homopentamer.</text>
</comment>
<comment type="subcellular location">
    <subcellularLocation>
        <location evidence="1">Cell inner membrane</location>
        <topology evidence="1">Multi-pass membrane protein</topology>
    </subcellularLocation>
</comment>
<comment type="similarity">
    <text evidence="1">Belongs to the MscL family.</text>
</comment>
<reference key="1">
    <citation type="journal article" date="2007" name="J. Bacteriol.">
        <title>The genome sequence of avian pathogenic Escherichia coli strain O1:K1:H7 shares strong similarities with human extraintestinal pathogenic E. coli genomes.</title>
        <authorList>
            <person name="Johnson T.J."/>
            <person name="Kariyawasam S."/>
            <person name="Wannemuehler Y."/>
            <person name="Mangiamele P."/>
            <person name="Johnson S.J."/>
            <person name="Doetkott C."/>
            <person name="Skyberg J.A."/>
            <person name="Lynne A.M."/>
            <person name="Johnson J.R."/>
            <person name="Nolan L.K."/>
        </authorList>
    </citation>
    <scope>NUCLEOTIDE SEQUENCE [LARGE SCALE GENOMIC DNA]</scope>
</reference>
<protein>
    <recommendedName>
        <fullName evidence="1">Large-conductance mechanosensitive channel</fullName>
    </recommendedName>
</protein>
<feature type="chain" id="PRO_1000015376" description="Large-conductance mechanosensitive channel">
    <location>
        <begin position="1"/>
        <end position="137"/>
    </location>
</feature>
<feature type="transmembrane region" description="Helical" evidence="1">
    <location>
        <begin position="10"/>
        <end position="30"/>
    </location>
</feature>
<feature type="transmembrane region" description="Helical" evidence="1">
    <location>
        <begin position="76"/>
        <end position="96"/>
    </location>
</feature>
<sequence>MSIIKEFREFAMRGNVVDLAVGVIIGAAFGKIVSSLVADIIMPPLGLLIGGIDFKQFAVTLREAQGDIPAVVMHYGVFIQNVFDFLIVAFAIFMAIKLINKLNRKKEEPAAATPAPTKEEVLLTEIRDLLKEQNNRS</sequence>
<evidence type="ECO:0000255" key="1">
    <source>
        <dbReference type="HAMAP-Rule" id="MF_00115"/>
    </source>
</evidence>
<gene>
    <name evidence="1" type="primary">mscL</name>
    <name type="ordered locus">Ecok1_32780</name>
    <name type="ORF">APECO1_3156</name>
</gene>
<organism>
    <name type="scientific">Escherichia coli O1:K1 / APEC</name>
    <dbReference type="NCBI Taxonomy" id="405955"/>
    <lineage>
        <taxon>Bacteria</taxon>
        <taxon>Pseudomonadati</taxon>
        <taxon>Pseudomonadota</taxon>
        <taxon>Gammaproteobacteria</taxon>
        <taxon>Enterobacterales</taxon>
        <taxon>Enterobacteriaceae</taxon>
        <taxon>Escherichia</taxon>
    </lineage>
</organism>
<name>MSCL_ECOK1</name>
<dbReference type="EMBL" id="CP000468">
    <property type="protein sequence ID" value="ABJ02772.1"/>
    <property type="molecule type" value="Genomic_DNA"/>
</dbReference>
<dbReference type="RefSeq" id="WP_000022450.1">
    <property type="nucleotide sequence ID" value="NZ_CADILS010000044.1"/>
</dbReference>
<dbReference type="SMR" id="A1AGI2"/>
<dbReference type="KEGG" id="ecv:APECO1_3156"/>
<dbReference type="HOGENOM" id="CLU_095787_0_0_6"/>
<dbReference type="Proteomes" id="UP000008216">
    <property type="component" value="Chromosome"/>
</dbReference>
<dbReference type="GO" id="GO:0005886">
    <property type="term" value="C:plasma membrane"/>
    <property type="evidence" value="ECO:0007669"/>
    <property type="project" value="UniProtKB-SubCell"/>
</dbReference>
<dbReference type="GO" id="GO:0008381">
    <property type="term" value="F:mechanosensitive monoatomic ion channel activity"/>
    <property type="evidence" value="ECO:0007669"/>
    <property type="project" value="UniProtKB-UniRule"/>
</dbReference>
<dbReference type="FunFam" id="1.10.1200.120:FF:000001">
    <property type="entry name" value="Large-conductance mechanosensitive channel"/>
    <property type="match status" value="1"/>
</dbReference>
<dbReference type="Gene3D" id="1.10.1200.120">
    <property type="entry name" value="Large-conductance mechanosensitive channel, MscL, domain 1"/>
    <property type="match status" value="1"/>
</dbReference>
<dbReference type="HAMAP" id="MF_00115">
    <property type="entry name" value="MscL"/>
    <property type="match status" value="1"/>
</dbReference>
<dbReference type="InterPro" id="IPR019823">
    <property type="entry name" value="Mechanosensitive_channel_CS"/>
</dbReference>
<dbReference type="InterPro" id="IPR001185">
    <property type="entry name" value="MS_channel"/>
</dbReference>
<dbReference type="InterPro" id="IPR037673">
    <property type="entry name" value="MSC/AndL"/>
</dbReference>
<dbReference type="InterPro" id="IPR036019">
    <property type="entry name" value="MscL_channel"/>
</dbReference>
<dbReference type="NCBIfam" id="TIGR00220">
    <property type="entry name" value="mscL"/>
    <property type="match status" value="1"/>
</dbReference>
<dbReference type="NCBIfam" id="NF001841">
    <property type="entry name" value="PRK00567.1-1"/>
    <property type="match status" value="1"/>
</dbReference>
<dbReference type="NCBIfam" id="NF001843">
    <property type="entry name" value="PRK00567.1-4"/>
    <property type="match status" value="1"/>
</dbReference>
<dbReference type="PANTHER" id="PTHR30266:SF2">
    <property type="entry name" value="LARGE-CONDUCTANCE MECHANOSENSITIVE CHANNEL"/>
    <property type="match status" value="1"/>
</dbReference>
<dbReference type="PANTHER" id="PTHR30266">
    <property type="entry name" value="MECHANOSENSITIVE CHANNEL MSCL"/>
    <property type="match status" value="1"/>
</dbReference>
<dbReference type="Pfam" id="PF01741">
    <property type="entry name" value="MscL"/>
    <property type="match status" value="1"/>
</dbReference>
<dbReference type="PRINTS" id="PR01264">
    <property type="entry name" value="MECHCHANNEL"/>
</dbReference>
<dbReference type="SUPFAM" id="SSF81330">
    <property type="entry name" value="Gated mechanosensitive channel"/>
    <property type="match status" value="1"/>
</dbReference>
<dbReference type="PROSITE" id="PS01327">
    <property type="entry name" value="MSCL"/>
    <property type="match status" value="1"/>
</dbReference>
<keyword id="KW-0997">Cell inner membrane</keyword>
<keyword id="KW-1003">Cell membrane</keyword>
<keyword id="KW-0407">Ion channel</keyword>
<keyword id="KW-0406">Ion transport</keyword>
<keyword id="KW-0472">Membrane</keyword>
<keyword id="KW-1185">Reference proteome</keyword>
<keyword id="KW-0812">Transmembrane</keyword>
<keyword id="KW-1133">Transmembrane helix</keyword>
<keyword id="KW-0813">Transport</keyword>